<accession>P86591</accession>
<proteinExistence type="evidence at protein level"/>
<name>TRP5_PENRU</name>
<dbReference type="GO" id="GO:0005576">
    <property type="term" value="C:extracellular region"/>
    <property type="evidence" value="ECO:0007005"/>
    <property type="project" value="UniProtKB"/>
</dbReference>
<dbReference type="GO" id="GO:0007218">
    <property type="term" value="P:neuropeptide signaling pathway"/>
    <property type="evidence" value="ECO:0007669"/>
    <property type="project" value="UniProtKB-KW"/>
</dbReference>
<organism>
    <name type="scientific">Pentatoma rufipes</name>
    <name type="common">Forest bug</name>
    <name type="synonym">Cimex rufipes</name>
    <dbReference type="NCBI Taxonomy" id="286670"/>
    <lineage>
        <taxon>Eukaryota</taxon>
        <taxon>Metazoa</taxon>
        <taxon>Ecdysozoa</taxon>
        <taxon>Arthropoda</taxon>
        <taxon>Hexapoda</taxon>
        <taxon>Insecta</taxon>
        <taxon>Pterygota</taxon>
        <taxon>Neoptera</taxon>
        <taxon>Paraneoptera</taxon>
        <taxon>Hemiptera</taxon>
        <taxon>Heteroptera</taxon>
        <taxon>Panheteroptera</taxon>
        <taxon>Pentatomomorpha</taxon>
        <taxon>Pentatomoidea</taxon>
        <taxon>Pentatomidae</taxon>
        <taxon>Pentatominae</taxon>
        <taxon>Pentatoma</taxon>
    </lineage>
</organism>
<keyword id="KW-0027">Amidation</keyword>
<keyword id="KW-0903">Direct protein sequencing</keyword>
<keyword id="KW-0527">Neuropeptide</keyword>
<keyword id="KW-0964">Secreted</keyword>
<protein>
    <recommendedName>
        <fullName evidence="2">Tachykinin-related peptide 5</fullName>
        <shortName evidence="2">TKRP-5</shortName>
    </recommendedName>
</protein>
<sequence>APLMGFQGVR</sequence>
<feature type="peptide" id="PRO_0000395660" description="Tachykinin-related peptide 5" evidence="1">
    <location>
        <begin position="1"/>
        <end position="10"/>
    </location>
</feature>
<feature type="modified residue" description="Arginine amide" evidence="1">
    <location>
        <position position="10"/>
    </location>
</feature>
<reference evidence="3" key="1">
    <citation type="journal article" date="2009" name="Peptides">
        <title>Neuropeptides in Heteroptera: identification of allatotropin-related peptide and tachykinin-related peptides using MALDI-TOF mass spectrometry.</title>
        <authorList>
            <person name="Neupert S."/>
            <person name="Russell W.K."/>
            <person name="Russell D.H."/>
            <person name="Lopez J.D. Jr."/>
            <person name="Predel R."/>
            <person name="Nachman R.J."/>
        </authorList>
    </citation>
    <scope>PROTEIN SEQUENCE</scope>
    <scope>SUBCELLULAR LOCATION</scope>
    <scope>TISSUE SPECIFICITY</scope>
    <scope>AMIDATION AT ARG-10</scope>
    <source>
        <tissue evidence="1">Antennal lobe</tissue>
    </source>
</reference>
<evidence type="ECO:0000269" key="1">
    <source>
    </source>
</evidence>
<evidence type="ECO:0000303" key="2">
    <source>
    </source>
</evidence>
<evidence type="ECO:0000305" key="3"/>
<comment type="subcellular location">
    <subcellularLocation>
        <location evidence="1 3">Secreted</location>
    </subcellularLocation>
</comment>
<comment type="tissue specificity">
    <text evidence="1">Expressed in the antennal lobe (at protein level).</text>
</comment>